<feature type="chain" id="PRO_0000423434" description="ATP-dependent DNA helicase Q5">
    <location>
        <begin position="1"/>
        <end position="982"/>
    </location>
</feature>
<feature type="domain" description="Helicase ATP-binding" evidence="4">
    <location>
        <begin position="39"/>
        <end position="213"/>
    </location>
</feature>
<feature type="domain" description="Helicase C-terminal" evidence="5">
    <location>
        <begin position="241"/>
        <end position="398"/>
    </location>
</feature>
<feature type="region of interest" description="Interaction with POLR2A" evidence="1">
    <location>
        <begin position="491"/>
        <end position="621"/>
    </location>
</feature>
<feature type="region of interest" description="Interaction with RAD51" evidence="1">
    <location>
        <begin position="653"/>
        <end position="726"/>
    </location>
</feature>
<feature type="region of interest" description="Disordered" evidence="6">
    <location>
        <begin position="675"/>
        <end position="797"/>
    </location>
</feature>
<feature type="region of interest" description="Disordered" evidence="6">
    <location>
        <begin position="812"/>
        <end position="893"/>
    </location>
</feature>
<feature type="short sequence motif" description="DEAH box">
    <location>
        <begin position="157"/>
        <end position="160"/>
    </location>
</feature>
<feature type="binding site" evidence="4">
    <location>
        <begin position="52"/>
        <end position="59"/>
    </location>
    <ligand>
        <name>ATP</name>
        <dbReference type="ChEBI" id="CHEBI:30616"/>
    </ligand>
</feature>
<feature type="binding site" evidence="3">
    <location>
        <position position="412"/>
    </location>
    <ligand>
        <name>Zn(2+)</name>
        <dbReference type="ChEBI" id="CHEBI:29105"/>
    </ligand>
</feature>
<feature type="binding site" evidence="3">
    <location>
        <position position="428"/>
    </location>
    <ligand>
        <name>Zn(2+)</name>
        <dbReference type="ChEBI" id="CHEBI:29105"/>
    </ligand>
</feature>
<feature type="binding site" evidence="3">
    <location>
        <position position="432"/>
    </location>
    <ligand>
        <name>Zn(2+)</name>
        <dbReference type="ChEBI" id="CHEBI:29105"/>
    </ligand>
</feature>
<feature type="binding site" evidence="3">
    <location>
        <position position="435"/>
    </location>
    <ligand>
        <name>Zn(2+)</name>
        <dbReference type="ChEBI" id="CHEBI:29105"/>
    </ligand>
</feature>
<feature type="modified residue" description="Phosphoserine" evidence="2">
    <location>
        <position position="489"/>
    </location>
</feature>
<feature type="modified residue" description="Phosphoserine" evidence="3">
    <location>
        <position position="492"/>
    </location>
</feature>
<feature type="modified residue" description="Phosphothreonine" evidence="8">
    <location>
        <position position="527"/>
    </location>
</feature>
<feature type="modified residue" description="Phosphoserine; by CDK1" evidence="3">
    <location>
        <position position="728"/>
    </location>
</feature>
<feature type="sequence conflict" description="In Ref. 4; BAC33647." evidence="7" ref="4">
    <original>K</original>
    <variation>R</variation>
    <location>
        <position position="419"/>
    </location>
</feature>
<feature type="sequence conflict" description="In Ref. 4; BAC34479." evidence="7" ref="4">
    <original>S</original>
    <variation>C</variation>
    <location>
        <position position="623"/>
    </location>
</feature>
<gene>
    <name type="primary">Recql5</name>
</gene>
<proteinExistence type="evidence at protein level"/>
<reference key="1">
    <citation type="journal article" date="2001" name="Gene">
        <title>Cloning, genomic structure and chromosomal localization of the gene encoding mouse DNA helicase RECQL5beta.</title>
        <authorList>
            <person name="Ohhata T."/>
            <person name="Araki R."/>
            <person name="Fukumura R."/>
            <person name="Kuroiwa A."/>
            <person name="Matsuda Y."/>
            <person name="Abe M."/>
        </authorList>
    </citation>
    <scope>NUCLEOTIDE SEQUENCE [MRNA]</scope>
    <scope>NUCLEOTIDE SEQUENCE [GENOMIC DNA] OF 412-982</scope>
    <source>
        <tissue>Fibroblast</tissue>
    </source>
</reference>
<reference key="2">
    <citation type="journal article" date="2009" name="PLoS Biol.">
        <title>Lineage-specific biology revealed by a finished genome assembly of the mouse.</title>
        <authorList>
            <person name="Church D.M."/>
            <person name="Goodstadt L."/>
            <person name="Hillier L.W."/>
            <person name="Zody M.C."/>
            <person name="Goldstein S."/>
            <person name="She X."/>
            <person name="Bult C.J."/>
            <person name="Agarwala R."/>
            <person name="Cherry J.L."/>
            <person name="DiCuccio M."/>
            <person name="Hlavina W."/>
            <person name="Kapustin Y."/>
            <person name="Meric P."/>
            <person name="Maglott D."/>
            <person name="Birtle Z."/>
            <person name="Marques A.C."/>
            <person name="Graves T."/>
            <person name="Zhou S."/>
            <person name="Teague B."/>
            <person name="Potamousis K."/>
            <person name="Churas C."/>
            <person name="Place M."/>
            <person name="Herschleb J."/>
            <person name="Runnheim R."/>
            <person name="Forrest D."/>
            <person name="Amos-Landgraf J."/>
            <person name="Schwartz D.C."/>
            <person name="Cheng Z."/>
            <person name="Lindblad-Toh K."/>
            <person name="Eichler E.E."/>
            <person name="Ponting C.P."/>
        </authorList>
    </citation>
    <scope>NUCLEOTIDE SEQUENCE [LARGE SCALE GENOMIC DNA]</scope>
    <source>
        <strain>C57BL/6J</strain>
    </source>
</reference>
<reference key="3">
    <citation type="submission" date="2005-07" db="EMBL/GenBank/DDBJ databases">
        <authorList>
            <person name="Mural R.J."/>
            <person name="Adams M.D."/>
            <person name="Myers E.W."/>
            <person name="Smith H.O."/>
            <person name="Venter J.C."/>
        </authorList>
    </citation>
    <scope>NUCLEOTIDE SEQUENCE [LARGE SCALE GENOMIC DNA]</scope>
</reference>
<reference key="4">
    <citation type="journal article" date="2005" name="Science">
        <title>The transcriptional landscape of the mammalian genome.</title>
        <authorList>
            <person name="Carninci P."/>
            <person name="Kasukawa T."/>
            <person name="Katayama S."/>
            <person name="Gough J."/>
            <person name="Frith M.C."/>
            <person name="Maeda N."/>
            <person name="Oyama R."/>
            <person name="Ravasi T."/>
            <person name="Lenhard B."/>
            <person name="Wells C."/>
            <person name="Kodzius R."/>
            <person name="Shimokawa K."/>
            <person name="Bajic V.B."/>
            <person name="Brenner S.E."/>
            <person name="Batalov S."/>
            <person name="Forrest A.R."/>
            <person name="Zavolan M."/>
            <person name="Davis M.J."/>
            <person name="Wilming L.G."/>
            <person name="Aidinis V."/>
            <person name="Allen J.E."/>
            <person name="Ambesi-Impiombato A."/>
            <person name="Apweiler R."/>
            <person name="Aturaliya R.N."/>
            <person name="Bailey T.L."/>
            <person name="Bansal M."/>
            <person name="Baxter L."/>
            <person name="Beisel K.W."/>
            <person name="Bersano T."/>
            <person name="Bono H."/>
            <person name="Chalk A.M."/>
            <person name="Chiu K.P."/>
            <person name="Choudhary V."/>
            <person name="Christoffels A."/>
            <person name="Clutterbuck D.R."/>
            <person name="Crowe M.L."/>
            <person name="Dalla E."/>
            <person name="Dalrymple B.P."/>
            <person name="de Bono B."/>
            <person name="Della Gatta G."/>
            <person name="di Bernardo D."/>
            <person name="Down T."/>
            <person name="Engstrom P."/>
            <person name="Fagiolini M."/>
            <person name="Faulkner G."/>
            <person name="Fletcher C.F."/>
            <person name="Fukushima T."/>
            <person name="Furuno M."/>
            <person name="Futaki S."/>
            <person name="Gariboldi M."/>
            <person name="Georgii-Hemming P."/>
            <person name="Gingeras T.R."/>
            <person name="Gojobori T."/>
            <person name="Green R.E."/>
            <person name="Gustincich S."/>
            <person name="Harbers M."/>
            <person name="Hayashi Y."/>
            <person name="Hensch T.K."/>
            <person name="Hirokawa N."/>
            <person name="Hill D."/>
            <person name="Huminiecki L."/>
            <person name="Iacono M."/>
            <person name="Ikeo K."/>
            <person name="Iwama A."/>
            <person name="Ishikawa T."/>
            <person name="Jakt M."/>
            <person name="Kanapin A."/>
            <person name="Katoh M."/>
            <person name="Kawasawa Y."/>
            <person name="Kelso J."/>
            <person name="Kitamura H."/>
            <person name="Kitano H."/>
            <person name="Kollias G."/>
            <person name="Krishnan S.P."/>
            <person name="Kruger A."/>
            <person name="Kummerfeld S.K."/>
            <person name="Kurochkin I.V."/>
            <person name="Lareau L.F."/>
            <person name="Lazarevic D."/>
            <person name="Lipovich L."/>
            <person name="Liu J."/>
            <person name="Liuni S."/>
            <person name="McWilliam S."/>
            <person name="Madan Babu M."/>
            <person name="Madera M."/>
            <person name="Marchionni L."/>
            <person name="Matsuda H."/>
            <person name="Matsuzawa S."/>
            <person name="Miki H."/>
            <person name="Mignone F."/>
            <person name="Miyake S."/>
            <person name="Morris K."/>
            <person name="Mottagui-Tabar S."/>
            <person name="Mulder N."/>
            <person name="Nakano N."/>
            <person name="Nakauchi H."/>
            <person name="Ng P."/>
            <person name="Nilsson R."/>
            <person name="Nishiguchi S."/>
            <person name="Nishikawa S."/>
            <person name="Nori F."/>
            <person name="Ohara O."/>
            <person name="Okazaki Y."/>
            <person name="Orlando V."/>
            <person name="Pang K.C."/>
            <person name="Pavan W.J."/>
            <person name="Pavesi G."/>
            <person name="Pesole G."/>
            <person name="Petrovsky N."/>
            <person name="Piazza S."/>
            <person name="Reed J."/>
            <person name="Reid J.F."/>
            <person name="Ring B.Z."/>
            <person name="Ringwald M."/>
            <person name="Rost B."/>
            <person name="Ruan Y."/>
            <person name="Salzberg S.L."/>
            <person name="Sandelin A."/>
            <person name="Schneider C."/>
            <person name="Schoenbach C."/>
            <person name="Sekiguchi K."/>
            <person name="Semple C.A."/>
            <person name="Seno S."/>
            <person name="Sessa L."/>
            <person name="Sheng Y."/>
            <person name="Shibata Y."/>
            <person name="Shimada H."/>
            <person name="Shimada K."/>
            <person name="Silva D."/>
            <person name="Sinclair B."/>
            <person name="Sperling S."/>
            <person name="Stupka E."/>
            <person name="Sugiura K."/>
            <person name="Sultana R."/>
            <person name="Takenaka Y."/>
            <person name="Taki K."/>
            <person name="Tammoja K."/>
            <person name="Tan S.L."/>
            <person name="Tang S."/>
            <person name="Taylor M.S."/>
            <person name="Tegner J."/>
            <person name="Teichmann S.A."/>
            <person name="Ueda H.R."/>
            <person name="van Nimwegen E."/>
            <person name="Verardo R."/>
            <person name="Wei C.L."/>
            <person name="Yagi K."/>
            <person name="Yamanishi H."/>
            <person name="Zabarovsky E."/>
            <person name="Zhu S."/>
            <person name="Zimmer A."/>
            <person name="Hide W."/>
            <person name="Bult C."/>
            <person name="Grimmond S.M."/>
            <person name="Teasdale R.D."/>
            <person name="Liu E.T."/>
            <person name="Brusic V."/>
            <person name="Quackenbush J."/>
            <person name="Wahlestedt C."/>
            <person name="Mattick J.S."/>
            <person name="Hume D.A."/>
            <person name="Kai C."/>
            <person name="Sasaki D."/>
            <person name="Tomaru Y."/>
            <person name="Fukuda S."/>
            <person name="Kanamori-Katayama M."/>
            <person name="Suzuki M."/>
            <person name="Aoki J."/>
            <person name="Arakawa T."/>
            <person name="Iida J."/>
            <person name="Imamura K."/>
            <person name="Itoh M."/>
            <person name="Kato T."/>
            <person name="Kawaji H."/>
            <person name="Kawagashira N."/>
            <person name="Kawashima T."/>
            <person name="Kojima M."/>
            <person name="Kondo S."/>
            <person name="Konno H."/>
            <person name="Nakano K."/>
            <person name="Ninomiya N."/>
            <person name="Nishio T."/>
            <person name="Okada M."/>
            <person name="Plessy C."/>
            <person name="Shibata K."/>
            <person name="Shiraki T."/>
            <person name="Suzuki S."/>
            <person name="Tagami M."/>
            <person name="Waki K."/>
            <person name="Watahiki A."/>
            <person name="Okamura-Oho Y."/>
            <person name="Suzuki H."/>
            <person name="Kawai J."/>
            <person name="Hayashizaki Y."/>
        </authorList>
    </citation>
    <scope>NUCLEOTIDE SEQUENCE [LARGE SCALE MRNA] OF 234-982</scope>
    <source>
        <strain>C57BL/6J</strain>
        <tissue>Embryo</tissue>
    </source>
</reference>
<reference key="5">
    <citation type="journal article" date="2010" name="Cell">
        <title>A tissue-specific atlas of mouse protein phosphorylation and expression.</title>
        <authorList>
            <person name="Huttlin E.L."/>
            <person name="Jedrychowski M.P."/>
            <person name="Elias J.E."/>
            <person name="Goswami T."/>
            <person name="Rad R."/>
            <person name="Beausoleil S.A."/>
            <person name="Villen J."/>
            <person name="Haas W."/>
            <person name="Sowa M.E."/>
            <person name="Gygi S.P."/>
        </authorList>
    </citation>
    <scope>PHOSPHORYLATION [LARGE SCALE ANALYSIS] AT THR-527</scope>
    <scope>IDENTIFICATION BY MASS SPECTROMETRY [LARGE SCALE ANALYSIS]</scope>
    <source>
        <tissue>Spleen</tissue>
    </source>
</reference>
<keyword id="KW-0067">ATP-binding</keyword>
<keyword id="KW-0131">Cell cycle</keyword>
<keyword id="KW-0132">Cell division</keyword>
<keyword id="KW-0227">DNA damage</keyword>
<keyword id="KW-0234">DNA repair</keyword>
<keyword id="KW-0235">DNA replication</keyword>
<keyword id="KW-0238">DNA-binding</keyword>
<keyword id="KW-0347">Helicase</keyword>
<keyword id="KW-0378">Hydrolase</keyword>
<keyword id="KW-0413">Isomerase</keyword>
<keyword id="KW-0479">Metal-binding</keyword>
<keyword id="KW-0498">Mitosis</keyword>
<keyword id="KW-0547">Nucleotide-binding</keyword>
<keyword id="KW-0539">Nucleus</keyword>
<keyword id="KW-0597">Phosphoprotein</keyword>
<keyword id="KW-1185">Reference proteome</keyword>
<keyword id="KW-0862">Zinc</keyword>
<organism>
    <name type="scientific">Mus musculus</name>
    <name type="common">Mouse</name>
    <dbReference type="NCBI Taxonomy" id="10090"/>
    <lineage>
        <taxon>Eukaryota</taxon>
        <taxon>Metazoa</taxon>
        <taxon>Chordata</taxon>
        <taxon>Craniata</taxon>
        <taxon>Vertebrata</taxon>
        <taxon>Euteleostomi</taxon>
        <taxon>Mammalia</taxon>
        <taxon>Eutheria</taxon>
        <taxon>Euarchontoglires</taxon>
        <taxon>Glires</taxon>
        <taxon>Rodentia</taxon>
        <taxon>Myomorpha</taxon>
        <taxon>Muroidea</taxon>
        <taxon>Muridae</taxon>
        <taxon>Murinae</taxon>
        <taxon>Mus</taxon>
        <taxon>Mus</taxon>
    </lineage>
</organism>
<sequence length="982" mass="108246">MSARPFSTPFDRERRVRSTLKKVFGFDSFKTPLQESATMAVVKGAEDVFVCMPTGAGKSLCYQLPALLASGITIVVSPLIALIQDQVDHLLALKVQVSSLNSKLSVQERKELLSDLERDKPRTKLLYITPEMAASASFQPTLNSLVSRNLLSYLVVDEAHCVSQWGHDFRPDYLRLGALRSRLAHAPCVALTATATPQVQEDVFAALHLKQPVASFKTPCFRANLFYDVQFKELIPDVYGNLRDFCLKALGQKAENGSSSGCGIVYCRTREACEQLAIELSSRGVNAKAYHAGLKASDRTQVQNEWMEEKVPVIVATISFGMGVDKANVRFVAHWNIAKSMAGYYQESGRAGRDGKPSWCRLYYSRNDRDQVSFLIRKELAKLQEKRGNKPSDKATLLAFDALVTFCEEVGCRHAAIAKYFGDAPPACAKGCDYCQNPAAITKKLDALERSSSWSKTCIGPSQGNGFDPELYEGGRRGYGGFSRYDEGSGGSGDEGRDEAHKREWNLFYQKQMSLRKGKEPKIEEFTPPDEDCPLREASSRKIPKLTVKAREHCLRLLEEALISNHQAAGSTHGADLQAKAVELEHETFRNAKMVNLYKASVLKKVAEIHKASKDGQLYDMESGTKSCGAAAEFSEPSDYDIPPTSHVYSLKPKRVGAGFSKGPCSFQTATELLGKSHSQKQAPEAMLEGGQEPPGWVCDLQDEDRSKPHPGYQEKALGSSVNCGDPSPEKKTKGSSQGSAKARASKKQQLLATAARKDSQNITRFLCQRTESPPLPASVPRSEDASPSCGDVPGKCTQEVGAQGHLVAVFQTEGPRERPSTCSLRDQSFPEGQPSPLKETQAEKRPRPQQGNPERRAQKRLRPSTKSSILAEAKDSTLASDRSTENKVAQEPCQLSASGTSLREAADIVVRHLTPFYKEGRFISKDLFKGFARHLSHLLAQQLSPGRSVKEEAQSLIKQFFHNRARCESEADWHSLRGPQR</sequence>
<evidence type="ECO:0000250" key="1"/>
<evidence type="ECO:0000250" key="2">
    <source>
        <dbReference type="UniProtKB" id="D4ACP5"/>
    </source>
</evidence>
<evidence type="ECO:0000250" key="3">
    <source>
        <dbReference type="UniProtKB" id="O94762"/>
    </source>
</evidence>
<evidence type="ECO:0000255" key="4">
    <source>
        <dbReference type="PROSITE-ProRule" id="PRU00541"/>
    </source>
</evidence>
<evidence type="ECO:0000255" key="5">
    <source>
        <dbReference type="PROSITE-ProRule" id="PRU00542"/>
    </source>
</evidence>
<evidence type="ECO:0000256" key="6">
    <source>
        <dbReference type="SAM" id="MobiDB-lite"/>
    </source>
</evidence>
<evidence type="ECO:0000305" key="7"/>
<evidence type="ECO:0007744" key="8">
    <source>
    </source>
</evidence>
<name>RECQ5_MOUSE</name>
<dbReference type="EC" id="5.6.2.4" evidence="3"/>
<dbReference type="EMBL" id="AB060698">
    <property type="protein sequence ID" value="BAB79233.1"/>
    <property type="molecule type" value="Genomic_DNA"/>
</dbReference>
<dbReference type="EMBL" id="AB059999">
    <property type="protein sequence ID" value="BAB79232.1"/>
    <property type="molecule type" value="mRNA"/>
</dbReference>
<dbReference type="EMBL" id="AL645647">
    <property type="status" value="NOT_ANNOTATED_CDS"/>
    <property type="molecule type" value="Genomic_DNA"/>
</dbReference>
<dbReference type="EMBL" id="CH466558">
    <property type="protein sequence ID" value="EDL34531.1"/>
    <property type="molecule type" value="Genomic_DNA"/>
</dbReference>
<dbReference type="EMBL" id="AK049269">
    <property type="protein sequence ID" value="BAC33647.1"/>
    <property type="molecule type" value="mRNA"/>
</dbReference>
<dbReference type="EMBL" id="AK050965">
    <property type="protein sequence ID" value="BAC34479.1"/>
    <property type="molecule type" value="mRNA"/>
</dbReference>
<dbReference type="CCDS" id="CCDS25650.1"/>
<dbReference type="RefSeq" id="NP_569721.1">
    <property type="nucleotide sequence ID" value="NM_130454.2"/>
</dbReference>
<dbReference type="RefSeq" id="XP_036012259.1">
    <property type="nucleotide sequence ID" value="XM_036156366.1"/>
</dbReference>
<dbReference type="SMR" id="Q8VID5"/>
<dbReference type="FunCoup" id="Q8VID5">
    <property type="interactions" value="3899"/>
</dbReference>
<dbReference type="STRING" id="10090.ENSMUSP00000021097"/>
<dbReference type="GlyGen" id="Q8VID5">
    <property type="glycosylation" value="1 site, 1 O-linked glycan (1 site)"/>
</dbReference>
<dbReference type="iPTMnet" id="Q8VID5"/>
<dbReference type="PhosphoSitePlus" id="Q8VID5"/>
<dbReference type="jPOST" id="Q8VID5"/>
<dbReference type="PaxDb" id="10090-ENSMUSP00000021097"/>
<dbReference type="PeptideAtlas" id="Q8VID5"/>
<dbReference type="ProteomicsDB" id="255280"/>
<dbReference type="Antibodypedia" id="19590">
    <property type="antibodies" value="175 antibodies from 26 providers"/>
</dbReference>
<dbReference type="DNASU" id="170472"/>
<dbReference type="Ensembl" id="ENSMUST00000021097.10">
    <property type="protein sequence ID" value="ENSMUSP00000021097.4"/>
    <property type="gene ID" value="ENSMUSG00000020752.12"/>
</dbReference>
<dbReference type="GeneID" id="170472"/>
<dbReference type="KEGG" id="mmu:170472"/>
<dbReference type="UCSC" id="uc007mix.2">
    <property type="organism name" value="mouse"/>
</dbReference>
<dbReference type="AGR" id="MGI:2156841"/>
<dbReference type="CTD" id="9400"/>
<dbReference type="MGI" id="MGI:2156841">
    <property type="gene designation" value="Recql5"/>
</dbReference>
<dbReference type="VEuPathDB" id="HostDB:ENSMUSG00000020752"/>
<dbReference type="eggNOG" id="KOG0352">
    <property type="taxonomic scope" value="Eukaryota"/>
</dbReference>
<dbReference type="GeneTree" id="ENSGT00940000157800"/>
<dbReference type="HOGENOM" id="CLU_001103_4_1_1"/>
<dbReference type="InParanoid" id="Q8VID5"/>
<dbReference type="OMA" id="WSDPGAC"/>
<dbReference type="OrthoDB" id="10261556at2759"/>
<dbReference type="PhylomeDB" id="Q8VID5"/>
<dbReference type="TreeFam" id="TF317614"/>
<dbReference type="BRENDA" id="3.6.4.12">
    <property type="organism ID" value="3474"/>
</dbReference>
<dbReference type="BioGRID-ORCS" id="170472">
    <property type="hits" value="10 hits in 112 CRISPR screens"/>
</dbReference>
<dbReference type="ChiTaRS" id="Recql5">
    <property type="organism name" value="mouse"/>
</dbReference>
<dbReference type="PRO" id="PR:Q8VID5"/>
<dbReference type="Proteomes" id="UP000000589">
    <property type="component" value="Chromosome 11"/>
</dbReference>
<dbReference type="RNAct" id="Q8VID5">
    <property type="molecule type" value="protein"/>
</dbReference>
<dbReference type="Bgee" id="ENSMUSG00000020752">
    <property type="expression patterns" value="Expressed in granulocyte and 143 other cell types or tissues"/>
</dbReference>
<dbReference type="ExpressionAtlas" id="Q8VID5">
    <property type="expression patterns" value="baseline and differential"/>
</dbReference>
<dbReference type="GO" id="GO:0005829">
    <property type="term" value="C:cytosol"/>
    <property type="evidence" value="ECO:0007669"/>
    <property type="project" value="Ensembl"/>
</dbReference>
<dbReference type="GO" id="GO:0005654">
    <property type="term" value="C:nucleoplasm"/>
    <property type="evidence" value="ECO:0007669"/>
    <property type="project" value="UniProtKB-SubCell"/>
</dbReference>
<dbReference type="GO" id="GO:0005634">
    <property type="term" value="C:nucleus"/>
    <property type="evidence" value="ECO:0000250"/>
    <property type="project" value="UniProtKB"/>
</dbReference>
<dbReference type="GO" id="GO:0005657">
    <property type="term" value="C:replication fork"/>
    <property type="evidence" value="ECO:0007669"/>
    <property type="project" value="Ensembl"/>
</dbReference>
<dbReference type="GO" id="GO:0097550">
    <property type="term" value="C:transcription preinitiation complex"/>
    <property type="evidence" value="ECO:0007669"/>
    <property type="project" value="Ensembl"/>
</dbReference>
<dbReference type="GO" id="GO:0005524">
    <property type="term" value="F:ATP binding"/>
    <property type="evidence" value="ECO:0007669"/>
    <property type="project" value="UniProtKB-KW"/>
</dbReference>
<dbReference type="GO" id="GO:0016887">
    <property type="term" value="F:ATP hydrolysis activity"/>
    <property type="evidence" value="ECO:0007669"/>
    <property type="project" value="RHEA"/>
</dbReference>
<dbReference type="GO" id="GO:0003677">
    <property type="term" value="F:DNA binding"/>
    <property type="evidence" value="ECO:0007669"/>
    <property type="project" value="UniProtKB-KW"/>
</dbReference>
<dbReference type="GO" id="GO:0003678">
    <property type="term" value="F:DNA helicase activity"/>
    <property type="evidence" value="ECO:0000250"/>
    <property type="project" value="UniProtKB"/>
</dbReference>
<dbReference type="GO" id="GO:0046872">
    <property type="term" value="F:metal ion binding"/>
    <property type="evidence" value="ECO:0007669"/>
    <property type="project" value="UniProtKB-KW"/>
</dbReference>
<dbReference type="GO" id="GO:0000993">
    <property type="term" value="F:RNA polymerase II complex binding"/>
    <property type="evidence" value="ECO:0000250"/>
    <property type="project" value="UniProtKB"/>
</dbReference>
<dbReference type="GO" id="GO:0051301">
    <property type="term" value="P:cell division"/>
    <property type="evidence" value="ECO:0007669"/>
    <property type="project" value="UniProtKB-KW"/>
</dbReference>
<dbReference type="GO" id="GO:0072757">
    <property type="term" value="P:cellular response to camptothecin"/>
    <property type="evidence" value="ECO:0000315"/>
    <property type="project" value="MGI"/>
</dbReference>
<dbReference type="GO" id="GO:0071466">
    <property type="term" value="P:cellular response to xenobiotic stimulus"/>
    <property type="evidence" value="ECO:0000315"/>
    <property type="project" value="MGI"/>
</dbReference>
<dbReference type="GO" id="GO:0051304">
    <property type="term" value="P:chromosome separation"/>
    <property type="evidence" value="ECO:0000250"/>
    <property type="project" value="UniProtKB"/>
</dbReference>
<dbReference type="GO" id="GO:0006281">
    <property type="term" value="P:DNA repair"/>
    <property type="evidence" value="ECO:0000250"/>
    <property type="project" value="UniProtKB"/>
</dbReference>
<dbReference type="GO" id="GO:0006260">
    <property type="term" value="P:DNA replication"/>
    <property type="evidence" value="ECO:0000250"/>
    <property type="project" value="UniProtKB"/>
</dbReference>
<dbReference type="GO" id="GO:0000278">
    <property type="term" value="P:mitotic cell cycle"/>
    <property type="evidence" value="ECO:0000250"/>
    <property type="project" value="UniProtKB"/>
</dbReference>
<dbReference type="GO" id="GO:1990506">
    <property type="term" value="P:mitotic DNA-templated DNA replication"/>
    <property type="evidence" value="ECO:0007669"/>
    <property type="project" value="Ensembl"/>
</dbReference>
<dbReference type="GO" id="GO:2000042">
    <property type="term" value="P:negative regulation of double-strand break repair via homologous recombination"/>
    <property type="evidence" value="ECO:0000316"/>
    <property type="project" value="MGI"/>
</dbReference>
<dbReference type="GO" id="GO:0034244">
    <property type="term" value="P:negative regulation of transcription elongation by RNA polymerase II"/>
    <property type="evidence" value="ECO:0000250"/>
    <property type="project" value="UniProtKB"/>
</dbReference>
<dbReference type="GO" id="GO:1990414">
    <property type="term" value="P:replication-born double-strand break repair via sister chromatid exchange"/>
    <property type="evidence" value="ECO:0000315"/>
    <property type="project" value="MGI"/>
</dbReference>
<dbReference type="CDD" id="cd18014">
    <property type="entry name" value="DEXHc_RecQ5"/>
    <property type="match status" value="1"/>
</dbReference>
<dbReference type="CDD" id="cd18794">
    <property type="entry name" value="SF2_C_RecQ"/>
    <property type="match status" value="1"/>
</dbReference>
<dbReference type="FunFam" id="3.40.50.300:FF:000444">
    <property type="entry name" value="ATP-dependent DNA helicase"/>
    <property type="match status" value="1"/>
</dbReference>
<dbReference type="FunFam" id="3.40.50.300:FF:000614">
    <property type="entry name" value="ATP-dependent DNA helicase"/>
    <property type="match status" value="1"/>
</dbReference>
<dbReference type="Gene3D" id="6.10.250.2460">
    <property type="match status" value="1"/>
</dbReference>
<dbReference type="Gene3D" id="6.10.250.3140">
    <property type="match status" value="1"/>
</dbReference>
<dbReference type="Gene3D" id="3.40.50.300">
    <property type="entry name" value="P-loop containing nucleotide triphosphate hydrolases"/>
    <property type="match status" value="2"/>
</dbReference>
<dbReference type="InterPro" id="IPR011545">
    <property type="entry name" value="DEAD/DEAH_box_helicase_dom"/>
</dbReference>
<dbReference type="InterPro" id="IPR002464">
    <property type="entry name" value="DNA/RNA_helicase_DEAH_CS"/>
</dbReference>
<dbReference type="InterPro" id="IPR004589">
    <property type="entry name" value="DNA_helicase_ATP-dep_RecQ"/>
</dbReference>
<dbReference type="InterPro" id="IPR014001">
    <property type="entry name" value="Helicase_ATP-bd"/>
</dbReference>
<dbReference type="InterPro" id="IPR001650">
    <property type="entry name" value="Helicase_C-like"/>
</dbReference>
<dbReference type="InterPro" id="IPR027417">
    <property type="entry name" value="P-loop_NTPase"/>
</dbReference>
<dbReference type="InterPro" id="IPR010716">
    <property type="entry name" value="RECQ5"/>
</dbReference>
<dbReference type="InterPro" id="IPR032284">
    <property type="entry name" value="RecQ_Zn-bd"/>
</dbReference>
<dbReference type="InterPro" id="IPR013257">
    <property type="entry name" value="SRI"/>
</dbReference>
<dbReference type="NCBIfam" id="TIGR00614">
    <property type="entry name" value="recQ_fam"/>
    <property type="match status" value="1"/>
</dbReference>
<dbReference type="PANTHER" id="PTHR13710:SF152">
    <property type="entry name" value="ATP-DEPENDENT DNA HELICASE Q5"/>
    <property type="match status" value="1"/>
</dbReference>
<dbReference type="PANTHER" id="PTHR13710">
    <property type="entry name" value="DNA HELICASE RECQ FAMILY MEMBER"/>
    <property type="match status" value="1"/>
</dbReference>
<dbReference type="Pfam" id="PF00270">
    <property type="entry name" value="DEAD"/>
    <property type="match status" value="1"/>
</dbReference>
<dbReference type="Pfam" id="PF00271">
    <property type="entry name" value="Helicase_C"/>
    <property type="match status" value="1"/>
</dbReference>
<dbReference type="Pfam" id="PF06959">
    <property type="entry name" value="RecQ5"/>
    <property type="match status" value="1"/>
</dbReference>
<dbReference type="Pfam" id="PF16124">
    <property type="entry name" value="RecQ_Zn_bind"/>
    <property type="match status" value="1"/>
</dbReference>
<dbReference type="Pfam" id="PF08236">
    <property type="entry name" value="SRI"/>
    <property type="match status" value="1"/>
</dbReference>
<dbReference type="SMART" id="SM00487">
    <property type="entry name" value="DEXDc"/>
    <property type="match status" value="1"/>
</dbReference>
<dbReference type="SMART" id="SM00490">
    <property type="entry name" value="HELICc"/>
    <property type="match status" value="1"/>
</dbReference>
<dbReference type="SUPFAM" id="SSF52540">
    <property type="entry name" value="P-loop containing nucleoside triphosphate hydrolases"/>
    <property type="match status" value="1"/>
</dbReference>
<dbReference type="PROSITE" id="PS00690">
    <property type="entry name" value="DEAH_ATP_HELICASE"/>
    <property type="match status" value="1"/>
</dbReference>
<dbReference type="PROSITE" id="PS51192">
    <property type="entry name" value="HELICASE_ATP_BIND_1"/>
    <property type="match status" value="1"/>
</dbReference>
<dbReference type="PROSITE" id="PS51194">
    <property type="entry name" value="HELICASE_CTER"/>
    <property type="match status" value="1"/>
</dbReference>
<protein>
    <recommendedName>
        <fullName>ATP-dependent DNA helicase Q5</fullName>
        <ecNumber evidence="3">5.6.2.4</ecNumber>
    </recommendedName>
    <alternativeName>
        <fullName evidence="7">DNA 3'-5' helicase RecQ5</fullName>
    </alternativeName>
    <alternativeName>
        <fullName>DNA helicase, RecQ-like type 5</fullName>
        <shortName>RecQ5</shortName>
    </alternativeName>
    <alternativeName>
        <fullName>RECQL5beta</fullName>
    </alternativeName>
    <alternativeName>
        <fullName>RecQ protein-like 5</fullName>
    </alternativeName>
</protein>
<comment type="function">
    <text evidence="3">DNA helicase that plays an important role in DNA replication, transcription and repair. Binds to the RNA polymerase II subunit POLR2A during transcription elongation and suppresses transcription-associated genomic instability. Also associates with POLR1A and enforces the stability of ribosomal DNA arrays. Plays an important role in mitotic chromosome separation after cross-over events and cell cycle progress. Mechanistically, removes RAD51 filaments protecting stalled replication forks at common fragile sites and stimulates MUS81-EME1 endonuclease leading to mitotic DNA synthesis. Required for efficient DNA repair, including repair of inter-strand cross-links. Stimulates DNA decatenation mediated by TOP2A. Prevents sister chromatid exchange and homologous recombination.</text>
</comment>
<comment type="catalytic activity">
    <reaction evidence="3">
        <text>Couples ATP hydrolysis with the unwinding of duplex DNA by translocating in the 3'-5' direction.</text>
        <dbReference type="EC" id="5.6.2.4"/>
    </reaction>
</comment>
<comment type="catalytic activity">
    <reaction evidence="3">
        <text>ATP + H2O = ADP + phosphate + H(+)</text>
        <dbReference type="Rhea" id="RHEA:13065"/>
        <dbReference type="ChEBI" id="CHEBI:15377"/>
        <dbReference type="ChEBI" id="CHEBI:15378"/>
        <dbReference type="ChEBI" id="CHEBI:30616"/>
        <dbReference type="ChEBI" id="CHEBI:43474"/>
        <dbReference type="ChEBI" id="CHEBI:456216"/>
    </reaction>
</comment>
<comment type="cofactor">
    <cofactor evidence="3">
        <name>Zn(2+)</name>
        <dbReference type="ChEBI" id="CHEBI:29105"/>
    </cofactor>
    <text evidence="3">Binds a Zn(2+) ion per subunit.</text>
</comment>
<comment type="subunit">
    <text evidence="1">Monomer. Interacts with TOP2A, TOP3A and TOP3B. Interacts with RNA polymerase II subunit POLR2A. Identified in a complex with the RNA polymerase II core bound to DNA. Interacts with RAD51 (By similarity). Interacts with WRN; this interaction stimulates WRN helicase activity on DNA fork duplexes (By similarity). Interacts with MUS1; this interaction promotes MUS81-dependent mitotic DNA synthesis (By similarity).</text>
</comment>
<comment type="subcellular location">
    <subcellularLocation>
        <location evidence="3">Nucleus</location>
        <location evidence="3">Nucleoplasm</location>
    </subcellularLocation>
    <text evidence="3">Recruited to sites of DNA damage, such as single-strand breaks and inter-strand cross-links, and at stalled replication forks.</text>
</comment>
<comment type="PTM">
    <text evidence="3">Phosphorylated by CDK1 at Ser-728; this phosphorylation is required for RECQL5-mediated disruption of RAD51 filaments on stalled replication forks.</text>
</comment>
<comment type="similarity">
    <text evidence="7">Belongs to the helicase family. RecQ subfamily.</text>
</comment>
<accession>Q8VID5</accession>
<accession>Q8BQD7</accession>
<accession>Q8C7T6</accession>
<accession>Q8VID3</accession>